<gene>
    <name evidence="1" type="primary">ureD2</name>
    <name type="ordered locus">Mpop_3209</name>
</gene>
<sequence>MSEEAWARSAGGRAILAESPRPVPSRQRSNGVVRLRVARAGIAADGPTRIVDLAEGGPLRLRFPRQGAERMLEGVLVNTGGGVACGDVFEVSVMVEAGAACLLTTTAAEKIYRSDGANATILNRIEVGPAGRLDWLPQETILFDRARLVRRFEADLAPDASLLVAEIAVLGRAARGERLEQALFEDRWRIRRGGRLVYADSLRLDGAVSDLMARAATGGGARALATLLDLAPGAEARLDEARTLLDALPAGVEAGASAWNGHLAVRMLAPAIAPLREAAARFLAVWRDRPMPRVWQS</sequence>
<organism>
    <name type="scientific">Methylorubrum populi (strain ATCC BAA-705 / NCIMB 13946 / BJ001)</name>
    <name type="common">Methylobacterium populi</name>
    <dbReference type="NCBI Taxonomy" id="441620"/>
    <lineage>
        <taxon>Bacteria</taxon>
        <taxon>Pseudomonadati</taxon>
        <taxon>Pseudomonadota</taxon>
        <taxon>Alphaproteobacteria</taxon>
        <taxon>Hyphomicrobiales</taxon>
        <taxon>Methylobacteriaceae</taxon>
        <taxon>Methylorubrum</taxon>
    </lineage>
</organism>
<protein>
    <recommendedName>
        <fullName evidence="1">Urease accessory protein UreD 2</fullName>
    </recommendedName>
</protein>
<accession>B1ZHP3</accession>
<dbReference type="EMBL" id="CP001029">
    <property type="protein sequence ID" value="ACB81361.1"/>
    <property type="status" value="ALT_INIT"/>
    <property type="molecule type" value="Genomic_DNA"/>
</dbReference>
<dbReference type="RefSeq" id="WP_244409664.1">
    <property type="nucleotide sequence ID" value="NC_010725.1"/>
</dbReference>
<dbReference type="SMR" id="B1ZHP3"/>
<dbReference type="STRING" id="441620.Mpop_3209"/>
<dbReference type="KEGG" id="mpo:Mpop_3209"/>
<dbReference type="eggNOG" id="COG0829">
    <property type="taxonomic scope" value="Bacteria"/>
</dbReference>
<dbReference type="HOGENOM" id="CLU_056339_2_0_5"/>
<dbReference type="Proteomes" id="UP000007136">
    <property type="component" value="Chromosome"/>
</dbReference>
<dbReference type="GO" id="GO:0005737">
    <property type="term" value="C:cytoplasm"/>
    <property type="evidence" value="ECO:0007669"/>
    <property type="project" value="UniProtKB-SubCell"/>
</dbReference>
<dbReference type="GO" id="GO:0016151">
    <property type="term" value="F:nickel cation binding"/>
    <property type="evidence" value="ECO:0007669"/>
    <property type="project" value="UniProtKB-UniRule"/>
</dbReference>
<dbReference type="HAMAP" id="MF_01384">
    <property type="entry name" value="UreD"/>
    <property type="match status" value="1"/>
</dbReference>
<dbReference type="InterPro" id="IPR002669">
    <property type="entry name" value="UreD"/>
</dbReference>
<dbReference type="PANTHER" id="PTHR33643">
    <property type="entry name" value="UREASE ACCESSORY PROTEIN D"/>
    <property type="match status" value="1"/>
</dbReference>
<dbReference type="PANTHER" id="PTHR33643:SF1">
    <property type="entry name" value="UREASE ACCESSORY PROTEIN D"/>
    <property type="match status" value="1"/>
</dbReference>
<dbReference type="Pfam" id="PF01774">
    <property type="entry name" value="UreD"/>
    <property type="match status" value="1"/>
</dbReference>
<proteinExistence type="inferred from homology"/>
<name>URED2_METPB</name>
<reference key="1">
    <citation type="submission" date="2008-04" db="EMBL/GenBank/DDBJ databases">
        <title>Complete sequence of chromosome of Methylobacterium populi BJ001.</title>
        <authorList>
            <consortium name="US DOE Joint Genome Institute"/>
            <person name="Copeland A."/>
            <person name="Lucas S."/>
            <person name="Lapidus A."/>
            <person name="Glavina del Rio T."/>
            <person name="Dalin E."/>
            <person name="Tice H."/>
            <person name="Bruce D."/>
            <person name="Goodwin L."/>
            <person name="Pitluck S."/>
            <person name="Chertkov O."/>
            <person name="Brettin T."/>
            <person name="Detter J.C."/>
            <person name="Han C."/>
            <person name="Kuske C.R."/>
            <person name="Schmutz J."/>
            <person name="Larimer F."/>
            <person name="Land M."/>
            <person name="Hauser L."/>
            <person name="Kyrpides N."/>
            <person name="Mikhailova N."/>
            <person name="Marx C."/>
            <person name="Richardson P."/>
        </authorList>
    </citation>
    <scope>NUCLEOTIDE SEQUENCE [LARGE SCALE GENOMIC DNA]</scope>
    <source>
        <strain>ATCC BAA-705 / NCIMB 13946 / BJ001</strain>
    </source>
</reference>
<evidence type="ECO:0000255" key="1">
    <source>
        <dbReference type="HAMAP-Rule" id="MF_01384"/>
    </source>
</evidence>
<evidence type="ECO:0000305" key="2"/>
<comment type="function">
    <text evidence="1">Required for maturation of urease via the functional incorporation of the urease nickel metallocenter.</text>
</comment>
<comment type="subunit">
    <text evidence="1">UreD, UreF and UreG form a complex that acts as a GTP-hydrolysis-dependent molecular chaperone, activating the urease apoprotein by helping to assemble the nickel containing metallocenter of UreC. The UreE protein probably delivers the nickel.</text>
</comment>
<comment type="subcellular location">
    <subcellularLocation>
        <location evidence="1">Cytoplasm</location>
    </subcellularLocation>
</comment>
<comment type="similarity">
    <text evidence="1">Belongs to the UreD family.</text>
</comment>
<comment type="sequence caution" evidence="2">
    <conflict type="erroneous initiation">
        <sequence resource="EMBL-CDS" id="ACB81361"/>
    </conflict>
</comment>
<keyword id="KW-0143">Chaperone</keyword>
<keyword id="KW-0963">Cytoplasm</keyword>
<keyword id="KW-0996">Nickel insertion</keyword>
<feature type="chain" id="PRO_0000346576" description="Urease accessory protein UreD 2">
    <location>
        <begin position="1"/>
        <end position="297"/>
    </location>
</feature>